<organism>
    <name type="scientific">Drosophila melanogaster</name>
    <name type="common">Fruit fly</name>
    <dbReference type="NCBI Taxonomy" id="7227"/>
    <lineage>
        <taxon>Eukaryota</taxon>
        <taxon>Metazoa</taxon>
        <taxon>Ecdysozoa</taxon>
        <taxon>Arthropoda</taxon>
        <taxon>Hexapoda</taxon>
        <taxon>Insecta</taxon>
        <taxon>Pterygota</taxon>
        <taxon>Neoptera</taxon>
        <taxon>Endopterygota</taxon>
        <taxon>Diptera</taxon>
        <taxon>Brachycera</taxon>
        <taxon>Muscomorpha</taxon>
        <taxon>Ephydroidea</taxon>
        <taxon>Drosophilidae</taxon>
        <taxon>Drosophila</taxon>
        <taxon>Sophophora</taxon>
    </lineage>
</organism>
<proteinExistence type="evidence at transcript level"/>
<gene>
    <name evidence="5" type="primary">Fign</name>
    <name evidence="5" type="ORF">CG3326</name>
</gene>
<comment type="catalytic activity">
    <reaction>
        <text>ATP + H2O = ADP + phosphate + H(+)</text>
        <dbReference type="Rhea" id="RHEA:13065"/>
        <dbReference type="ChEBI" id="CHEBI:15377"/>
        <dbReference type="ChEBI" id="CHEBI:15378"/>
        <dbReference type="ChEBI" id="CHEBI:30616"/>
        <dbReference type="ChEBI" id="CHEBI:43474"/>
        <dbReference type="ChEBI" id="CHEBI:456216"/>
    </reaction>
</comment>
<comment type="cofactor">
    <cofactor evidence="1">
        <name>Mg(2+)</name>
        <dbReference type="ChEBI" id="CHEBI:18420"/>
    </cofactor>
</comment>
<comment type="subunit">
    <text evidence="1">Hexamer.</text>
</comment>
<comment type="similarity">
    <text evidence="4">Belongs to the AAA ATPase family.</text>
</comment>
<name>FIGL1_DROME</name>
<accession>Q9VQN8</accession>
<accession>Q95TF9</accession>
<feature type="chain" id="PRO_0000302730" description="Fidgetin-like protein 1">
    <location>
        <begin position="1"/>
        <end position="523"/>
    </location>
</feature>
<feature type="region of interest" description="Disordered" evidence="3">
    <location>
        <begin position="114"/>
        <end position="154"/>
    </location>
</feature>
<feature type="compositionally biased region" description="Low complexity" evidence="3">
    <location>
        <begin position="141"/>
        <end position="151"/>
    </location>
</feature>
<feature type="binding site" evidence="2">
    <location>
        <position position="253"/>
    </location>
    <ligand>
        <name>ATP</name>
        <dbReference type="ChEBI" id="CHEBI:30616"/>
    </ligand>
</feature>
<feature type="binding site" evidence="2">
    <location>
        <begin position="293"/>
        <end position="298"/>
    </location>
    <ligand>
        <name>ATP</name>
        <dbReference type="ChEBI" id="CHEBI:30616"/>
    </ligand>
</feature>
<feature type="sequence conflict" description="In Ref. 3; AAL14019." evidence="4" ref="3">
    <original>T</original>
    <variation>A</variation>
    <location>
        <position position="175"/>
    </location>
</feature>
<feature type="sequence conflict" description="In Ref. 3; AAL14019." evidence="4" ref="3">
    <original>D</original>
    <variation>E</variation>
    <location>
        <position position="234"/>
    </location>
</feature>
<evidence type="ECO:0000250" key="1"/>
<evidence type="ECO:0000250" key="2">
    <source>
        <dbReference type="UniProtKB" id="Q6PIW4"/>
    </source>
</evidence>
<evidence type="ECO:0000256" key="3">
    <source>
        <dbReference type="SAM" id="MobiDB-lite"/>
    </source>
</evidence>
<evidence type="ECO:0000305" key="4"/>
<evidence type="ECO:0000312" key="5">
    <source>
        <dbReference type="FlyBase" id="FBgn0031519"/>
    </source>
</evidence>
<reference key="1">
    <citation type="journal article" date="2000" name="Science">
        <title>The genome sequence of Drosophila melanogaster.</title>
        <authorList>
            <person name="Adams M.D."/>
            <person name="Celniker S.E."/>
            <person name="Holt R.A."/>
            <person name="Evans C.A."/>
            <person name="Gocayne J.D."/>
            <person name="Amanatides P.G."/>
            <person name="Scherer S.E."/>
            <person name="Li P.W."/>
            <person name="Hoskins R.A."/>
            <person name="Galle R.F."/>
            <person name="George R.A."/>
            <person name="Lewis S.E."/>
            <person name="Richards S."/>
            <person name="Ashburner M."/>
            <person name="Henderson S.N."/>
            <person name="Sutton G.G."/>
            <person name="Wortman J.R."/>
            <person name="Yandell M.D."/>
            <person name="Zhang Q."/>
            <person name="Chen L.X."/>
            <person name="Brandon R.C."/>
            <person name="Rogers Y.-H.C."/>
            <person name="Blazej R.G."/>
            <person name="Champe M."/>
            <person name="Pfeiffer B.D."/>
            <person name="Wan K.H."/>
            <person name="Doyle C."/>
            <person name="Baxter E.G."/>
            <person name="Helt G."/>
            <person name="Nelson C.R."/>
            <person name="Miklos G.L.G."/>
            <person name="Abril J.F."/>
            <person name="Agbayani A."/>
            <person name="An H.-J."/>
            <person name="Andrews-Pfannkoch C."/>
            <person name="Baldwin D."/>
            <person name="Ballew R.M."/>
            <person name="Basu A."/>
            <person name="Baxendale J."/>
            <person name="Bayraktaroglu L."/>
            <person name="Beasley E.M."/>
            <person name="Beeson K.Y."/>
            <person name="Benos P.V."/>
            <person name="Berman B.P."/>
            <person name="Bhandari D."/>
            <person name="Bolshakov S."/>
            <person name="Borkova D."/>
            <person name="Botchan M.R."/>
            <person name="Bouck J."/>
            <person name="Brokstein P."/>
            <person name="Brottier P."/>
            <person name="Burtis K.C."/>
            <person name="Busam D.A."/>
            <person name="Butler H."/>
            <person name="Cadieu E."/>
            <person name="Center A."/>
            <person name="Chandra I."/>
            <person name="Cherry J.M."/>
            <person name="Cawley S."/>
            <person name="Dahlke C."/>
            <person name="Davenport L.B."/>
            <person name="Davies P."/>
            <person name="de Pablos B."/>
            <person name="Delcher A."/>
            <person name="Deng Z."/>
            <person name="Mays A.D."/>
            <person name="Dew I."/>
            <person name="Dietz S.M."/>
            <person name="Dodson K."/>
            <person name="Doup L.E."/>
            <person name="Downes M."/>
            <person name="Dugan-Rocha S."/>
            <person name="Dunkov B.C."/>
            <person name="Dunn P."/>
            <person name="Durbin K.J."/>
            <person name="Evangelista C.C."/>
            <person name="Ferraz C."/>
            <person name="Ferriera S."/>
            <person name="Fleischmann W."/>
            <person name="Fosler C."/>
            <person name="Gabrielian A.E."/>
            <person name="Garg N.S."/>
            <person name="Gelbart W.M."/>
            <person name="Glasser K."/>
            <person name="Glodek A."/>
            <person name="Gong F."/>
            <person name="Gorrell J.H."/>
            <person name="Gu Z."/>
            <person name="Guan P."/>
            <person name="Harris M."/>
            <person name="Harris N.L."/>
            <person name="Harvey D.A."/>
            <person name="Heiman T.J."/>
            <person name="Hernandez J.R."/>
            <person name="Houck J."/>
            <person name="Hostin D."/>
            <person name="Houston K.A."/>
            <person name="Howland T.J."/>
            <person name="Wei M.-H."/>
            <person name="Ibegwam C."/>
            <person name="Jalali M."/>
            <person name="Kalush F."/>
            <person name="Karpen G.H."/>
            <person name="Ke Z."/>
            <person name="Kennison J.A."/>
            <person name="Ketchum K.A."/>
            <person name="Kimmel B.E."/>
            <person name="Kodira C.D."/>
            <person name="Kraft C.L."/>
            <person name="Kravitz S."/>
            <person name="Kulp D."/>
            <person name="Lai Z."/>
            <person name="Lasko P."/>
            <person name="Lei Y."/>
            <person name="Levitsky A.A."/>
            <person name="Li J.H."/>
            <person name="Li Z."/>
            <person name="Liang Y."/>
            <person name="Lin X."/>
            <person name="Liu X."/>
            <person name="Mattei B."/>
            <person name="McIntosh T.C."/>
            <person name="McLeod M.P."/>
            <person name="McPherson D."/>
            <person name="Merkulov G."/>
            <person name="Milshina N.V."/>
            <person name="Mobarry C."/>
            <person name="Morris J."/>
            <person name="Moshrefi A."/>
            <person name="Mount S.M."/>
            <person name="Moy M."/>
            <person name="Murphy B."/>
            <person name="Murphy L."/>
            <person name="Muzny D.M."/>
            <person name="Nelson D.L."/>
            <person name="Nelson D.R."/>
            <person name="Nelson K.A."/>
            <person name="Nixon K."/>
            <person name="Nusskern D.R."/>
            <person name="Pacleb J.M."/>
            <person name="Palazzolo M."/>
            <person name="Pittman G.S."/>
            <person name="Pan S."/>
            <person name="Pollard J."/>
            <person name="Puri V."/>
            <person name="Reese M.G."/>
            <person name="Reinert K."/>
            <person name="Remington K."/>
            <person name="Saunders R.D.C."/>
            <person name="Scheeler F."/>
            <person name="Shen H."/>
            <person name="Shue B.C."/>
            <person name="Siden-Kiamos I."/>
            <person name="Simpson M."/>
            <person name="Skupski M.P."/>
            <person name="Smith T.J."/>
            <person name="Spier E."/>
            <person name="Spradling A.C."/>
            <person name="Stapleton M."/>
            <person name="Strong R."/>
            <person name="Sun E."/>
            <person name="Svirskas R."/>
            <person name="Tector C."/>
            <person name="Turner R."/>
            <person name="Venter E."/>
            <person name="Wang A.H."/>
            <person name="Wang X."/>
            <person name="Wang Z.-Y."/>
            <person name="Wassarman D.A."/>
            <person name="Weinstock G.M."/>
            <person name="Weissenbach J."/>
            <person name="Williams S.M."/>
            <person name="Woodage T."/>
            <person name="Worley K.C."/>
            <person name="Wu D."/>
            <person name="Yang S."/>
            <person name="Yao Q.A."/>
            <person name="Ye J."/>
            <person name="Yeh R.-F."/>
            <person name="Zaveri J.S."/>
            <person name="Zhan M."/>
            <person name="Zhang G."/>
            <person name="Zhao Q."/>
            <person name="Zheng L."/>
            <person name="Zheng X.H."/>
            <person name="Zhong F.N."/>
            <person name="Zhong W."/>
            <person name="Zhou X."/>
            <person name="Zhu S.C."/>
            <person name="Zhu X."/>
            <person name="Smith H.O."/>
            <person name="Gibbs R.A."/>
            <person name="Myers E.W."/>
            <person name="Rubin G.M."/>
            <person name="Venter J.C."/>
        </authorList>
    </citation>
    <scope>NUCLEOTIDE SEQUENCE [LARGE SCALE GENOMIC DNA]</scope>
    <source>
        <strain>Berkeley</strain>
    </source>
</reference>
<reference key="2">
    <citation type="journal article" date="2002" name="Genome Biol.">
        <title>Annotation of the Drosophila melanogaster euchromatic genome: a systematic review.</title>
        <authorList>
            <person name="Misra S."/>
            <person name="Crosby M.A."/>
            <person name="Mungall C.J."/>
            <person name="Matthews B.B."/>
            <person name="Campbell K.S."/>
            <person name="Hradecky P."/>
            <person name="Huang Y."/>
            <person name="Kaminker J.S."/>
            <person name="Millburn G.H."/>
            <person name="Prochnik S.E."/>
            <person name="Smith C.D."/>
            <person name="Tupy J.L."/>
            <person name="Whitfield E.J."/>
            <person name="Bayraktaroglu L."/>
            <person name="Berman B.P."/>
            <person name="Bettencourt B.R."/>
            <person name="Celniker S.E."/>
            <person name="de Grey A.D.N.J."/>
            <person name="Drysdale R.A."/>
            <person name="Harris N.L."/>
            <person name="Richter J."/>
            <person name="Russo S."/>
            <person name="Schroeder A.J."/>
            <person name="Shu S.Q."/>
            <person name="Stapleton M."/>
            <person name="Yamada C."/>
            <person name="Ashburner M."/>
            <person name="Gelbart W.M."/>
            <person name="Rubin G.M."/>
            <person name="Lewis S.E."/>
        </authorList>
    </citation>
    <scope>GENOME REANNOTATION</scope>
    <source>
        <strain>Berkeley</strain>
    </source>
</reference>
<reference key="3">
    <citation type="journal article" date="2002" name="Genome Biol.">
        <title>A Drosophila full-length cDNA resource.</title>
        <authorList>
            <person name="Stapleton M."/>
            <person name="Carlson J.W."/>
            <person name="Brokstein P."/>
            <person name="Yu C."/>
            <person name="Champe M."/>
            <person name="George R.A."/>
            <person name="Guarin H."/>
            <person name="Kronmiller B."/>
            <person name="Pacleb J.M."/>
            <person name="Park S."/>
            <person name="Wan K.H."/>
            <person name="Rubin G.M."/>
            <person name="Celniker S.E."/>
        </authorList>
    </citation>
    <scope>NUCLEOTIDE SEQUENCE [LARGE SCALE MRNA]</scope>
    <source>
        <strain>Berkeley</strain>
        <tissue>Embryo</tissue>
    </source>
</reference>
<protein>
    <recommendedName>
        <fullName>Fidgetin-like protein 1</fullName>
        <ecNumber>3.6.4.-</ecNumber>
    </recommendedName>
</protein>
<dbReference type="EC" id="3.6.4.-"/>
<dbReference type="EMBL" id="AE014134">
    <property type="protein sequence ID" value="AAF51127.2"/>
    <property type="molecule type" value="Genomic_DNA"/>
</dbReference>
<dbReference type="EMBL" id="AY058790">
    <property type="protein sequence ID" value="AAL14019.1"/>
    <property type="molecule type" value="mRNA"/>
</dbReference>
<dbReference type="RefSeq" id="NP_001259995.1">
    <property type="nucleotide sequence ID" value="NM_001273066.1"/>
</dbReference>
<dbReference type="RefSeq" id="NP_608763.2">
    <property type="nucleotide sequence ID" value="NM_134919.3"/>
</dbReference>
<dbReference type="SMR" id="Q9VQN8"/>
<dbReference type="FunCoup" id="Q9VQN8">
    <property type="interactions" value="813"/>
</dbReference>
<dbReference type="STRING" id="7227.FBpp0303790"/>
<dbReference type="PaxDb" id="7227-FBpp0303790"/>
<dbReference type="EnsemblMetazoa" id="FBtr0077603">
    <property type="protein sequence ID" value="FBpp0077290"/>
    <property type="gene ID" value="FBgn0031519"/>
</dbReference>
<dbReference type="EnsemblMetazoa" id="FBtr0331372">
    <property type="protein sequence ID" value="FBpp0303790"/>
    <property type="gene ID" value="FBgn0031519"/>
</dbReference>
<dbReference type="GeneID" id="33544"/>
<dbReference type="KEGG" id="dme:Dmel_CG3326"/>
<dbReference type="UCSC" id="CG3326-RA">
    <property type="organism name" value="d. melanogaster"/>
</dbReference>
<dbReference type="AGR" id="FB:FBgn0031519"/>
<dbReference type="CTD" id="55137"/>
<dbReference type="FlyBase" id="FBgn0031519">
    <property type="gene designation" value="Fign"/>
</dbReference>
<dbReference type="VEuPathDB" id="VectorBase:FBgn0031519"/>
<dbReference type="eggNOG" id="KOG0740">
    <property type="taxonomic scope" value="Eukaryota"/>
</dbReference>
<dbReference type="GeneTree" id="ENSGT00940000171393"/>
<dbReference type="HOGENOM" id="CLU_000688_21_10_1"/>
<dbReference type="InParanoid" id="Q9VQN8"/>
<dbReference type="OMA" id="IAWEDIA"/>
<dbReference type="OrthoDB" id="10251136at2759"/>
<dbReference type="PhylomeDB" id="Q9VQN8"/>
<dbReference type="BioGRID-ORCS" id="33544">
    <property type="hits" value="0 hits in 3 CRISPR screens"/>
</dbReference>
<dbReference type="CD-CODE" id="2838EF58">
    <property type="entry name" value="Centrosome"/>
</dbReference>
<dbReference type="GenomeRNAi" id="33544"/>
<dbReference type="PRO" id="PR:Q9VQN8"/>
<dbReference type="Proteomes" id="UP000000803">
    <property type="component" value="Chromosome 2L"/>
</dbReference>
<dbReference type="Bgee" id="FBgn0031519">
    <property type="expression patterns" value="Expressed in adult middle midgut class I enteroendocrine cell in adult midgut (Drosophila) and 27 other cell types or tissues"/>
</dbReference>
<dbReference type="ExpressionAtlas" id="Q9VQN8">
    <property type="expression patterns" value="baseline and differential"/>
</dbReference>
<dbReference type="GO" id="GO:0005813">
    <property type="term" value="C:centrosome"/>
    <property type="evidence" value="ECO:0000314"/>
    <property type="project" value="FlyBase"/>
</dbReference>
<dbReference type="GO" id="GO:0005694">
    <property type="term" value="C:chromosome"/>
    <property type="evidence" value="ECO:0000314"/>
    <property type="project" value="FlyBase"/>
</dbReference>
<dbReference type="GO" id="GO:0005524">
    <property type="term" value="F:ATP binding"/>
    <property type="evidence" value="ECO:0007669"/>
    <property type="project" value="UniProtKB-KW"/>
</dbReference>
<dbReference type="GO" id="GO:0016887">
    <property type="term" value="F:ATP hydrolysis activity"/>
    <property type="evidence" value="ECO:0000318"/>
    <property type="project" value="GO_Central"/>
</dbReference>
<dbReference type="GO" id="GO:0016787">
    <property type="term" value="F:hydrolase activity"/>
    <property type="evidence" value="ECO:0000250"/>
    <property type="project" value="UniProtKB"/>
</dbReference>
<dbReference type="GO" id="GO:0000287">
    <property type="term" value="F:magnesium ion binding"/>
    <property type="evidence" value="ECO:0000250"/>
    <property type="project" value="UniProtKB"/>
</dbReference>
<dbReference type="GO" id="GO:0008568">
    <property type="term" value="F:microtubule severing ATPase activity"/>
    <property type="evidence" value="ECO:0000315"/>
    <property type="project" value="FlyBase"/>
</dbReference>
<dbReference type="GO" id="GO:0046034">
    <property type="term" value="P:ATP metabolic process"/>
    <property type="evidence" value="ECO:0000250"/>
    <property type="project" value="UniProtKB"/>
</dbReference>
<dbReference type="GO" id="GO:0051013">
    <property type="term" value="P:microtubule severing"/>
    <property type="evidence" value="ECO:0000315"/>
    <property type="project" value="FlyBase"/>
</dbReference>
<dbReference type="GO" id="GO:0000070">
    <property type="term" value="P:mitotic sister chromatid segregation"/>
    <property type="evidence" value="ECO:0000315"/>
    <property type="project" value="FlyBase"/>
</dbReference>
<dbReference type="GO" id="GO:0031114">
    <property type="term" value="P:regulation of microtubule depolymerization"/>
    <property type="evidence" value="ECO:0000315"/>
    <property type="project" value="FlyBase"/>
</dbReference>
<dbReference type="GO" id="GO:0009611">
    <property type="term" value="P:response to wounding"/>
    <property type="evidence" value="ECO:0000315"/>
    <property type="project" value="FlyBase"/>
</dbReference>
<dbReference type="FunFam" id="1.10.8.60:FF:000022">
    <property type="entry name" value="Fidgetin like 1"/>
    <property type="match status" value="1"/>
</dbReference>
<dbReference type="FunFam" id="3.40.50.300:FF:000093">
    <property type="entry name" value="Fidgetin-like 1"/>
    <property type="match status" value="1"/>
</dbReference>
<dbReference type="Gene3D" id="1.10.8.60">
    <property type="match status" value="1"/>
</dbReference>
<dbReference type="Gene3D" id="3.40.50.300">
    <property type="entry name" value="P-loop containing nucleotide triphosphate hydrolases"/>
    <property type="match status" value="1"/>
</dbReference>
<dbReference type="InterPro" id="IPR003593">
    <property type="entry name" value="AAA+_ATPase"/>
</dbReference>
<dbReference type="InterPro" id="IPR041569">
    <property type="entry name" value="AAA_lid_3"/>
</dbReference>
<dbReference type="InterPro" id="IPR003959">
    <property type="entry name" value="ATPase_AAA_core"/>
</dbReference>
<dbReference type="InterPro" id="IPR003960">
    <property type="entry name" value="ATPase_AAA_CS"/>
</dbReference>
<dbReference type="InterPro" id="IPR050304">
    <property type="entry name" value="MT-severing_AAA_ATPase"/>
</dbReference>
<dbReference type="InterPro" id="IPR027417">
    <property type="entry name" value="P-loop_NTPase"/>
</dbReference>
<dbReference type="InterPro" id="IPR015415">
    <property type="entry name" value="Spast_Vps4_C"/>
</dbReference>
<dbReference type="PANTHER" id="PTHR23074">
    <property type="entry name" value="AAA DOMAIN-CONTAINING"/>
    <property type="match status" value="1"/>
</dbReference>
<dbReference type="PANTHER" id="PTHR23074:SF17">
    <property type="entry name" value="FIDGETIN-LIKE PROTEIN 1"/>
    <property type="match status" value="1"/>
</dbReference>
<dbReference type="Pfam" id="PF00004">
    <property type="entry name" value="AAA"/>
    <property type="match status" value="1"/>
</dbReference>
<dbReference type="Pfam" id="PF17862">
    <property type="entry name" value="AAA_lid_3"/>
    <property type="match status" value="1"/>
</dbReference>
<dbReference type="Pfam" id="PF09336">
    <property type="entry name" value="Vps4_C"/>
    <property type="match status" value="1"/>
</dbReference>
<dbReference type="SMART" id="SM00382">
    <property type="entry name" value="AAA"/>
    <property type="match status" value="1"/>
</dbReference>
<dbReference type="SUPFAM" id="SSF52540">
    <property type="entry name" value="P-loop containing nucleoside triphosphate hydrolases"/>
    <property type="match status" value="1"/>
</dbReference>
<dbReference type="PROSITE" id="PS00674">
    <property type="entry name" value="AAA"/>
    <property type="match status" value="1"/>
</dbReference>
<sequence length="523" mass="58549">MSDEQSSWRSKLLLICQQTRSSSESIHFAALKDHHARLQACESMEKAMKERCQKKITMSRRTKRGITHAGYLFEMPHNSVFEPECRGFYESCQQTEMASSDLQAPALEVSSTYPVQQAVKSRPEGQFPESRNNSTKKIDAQQYSSESSSQSGFGFRTAREQLIMDELKKKNRQATSEVDAVPTGMMNFRKKTLGGKRTVSSNFVSPVAQNDNSTSSRSSSIPPALAHLDSKMVDHILGESMHDFKPVAWEDIAGLESAKSTFLEAIIMPLRRPDLFTGVRCPPRGVLLFGPPGTGKTLIAKSIASQAKAKFFSINPSSLTSKWVGDAEKLVKTLFAVAAAHQPAIIFIDEVDSLLSKRSANENESTLRLKNEFLIHLDGAASNEEIRVLVIGATNRPQELDEAVRRRFVRRLYVPLPTREARQKIIEKLIHQVKHNLDVRQVIELAELTDGYSGADVDTLCRYASMAPLRSLTPDQMEVIETHQLPAVTMDDFKQALRVISKSVSSEDCKQFEAWNEIYGVRH</sequence>
<keyword id="KW-0067">ATP-binding</keyword>
<keyword id="KW-0378">Hydrolase</keyword>
<keyword id="KW-0460">Magnesium</keyword>
<keyword id="KW-0479">Metal-binding</keyword>
<keyword id="KW-0547">Nucleotide-binding</keyword>
<keyword id="KW-1185">Reference proteome</keyword>